<keyword id="KW-0002">3D-structure</keyword>
<keyword id="KW-0496">Mitochondrion</keyword>
<keyword id="KW-1185">Reference proteome</keyword>
<keyword id="KW-0687">Ribonucleoprotein</keyword>
<keyword id="KW-0689">Ribosomal protein</keyword>
<proteinExistence type="evidence at protein level"/>
<comment type="subunit">
    <text evidence="1">Component of the mitochondrial ribosome small subunit (28S) which comprises a 12S rRNA and about 30 distinct proteins.</text>
</comment>
<comment type="subcellular location">
    <subcellularLocation>
        <location evidence="1">Mitochondrion</location>
    </subcellularLocation>
</comment>
<comment type="similarity">
    <text evidence="2">Belongs to the bacterial ribosomal protein bS6 family.</text>
</comment>
<comment type="sequence caution" evidence="2">
    <conflict type="erroneous initiation">
        <sequence resource="EMBL-CDS" id="BAB40996"/>
    </conflict>
</comment>
<dbReference type="EMBL" id="AB049943">
    <property type="protein sequence ID" value="BAB40996.1"/>
    <property type="status" value="ALT_INIT"/>
    <property type="molecule type" value="mRNA"/>
</dbReference>
<dbReference type="EMBL" id="AY061856">
    <property type="protein sequence ID" value="AAL35740.1"/>
    <property type="molecule type" value="mRNA"/>
</dbReference>
<dbReference type="EMBL" id="BC027271">
    <property type="protein sequence ID" value="AAH27271.1"/>
    <property type="molecule type" value="mRNA"/>
</dbReference>
<dbReference type="CCDS" id="CCDS28332.1"/>
<dbReference type="RefSeq" id="NP_536704.1">
    <property type="nucleotide sequence ID" value="NM_080456.1"/>
</dbReference>
<dbReference type="PDB" id="7PNT">
    <property type="method" value="EM"/>
    <property type="resolution" value="3.19 A"/>
    <property type="chains" value="E=1-125"/>
</dbReference>
<dbReference type="PDB" id="7PNU">
    <property type="method" value="EM"/>
    <property type="resolution" value="3.06 A"/>
    <property type="chains" value="E=1-125"/>
</dbReference>
<dbReference type="PDB" id="7PNV">
    <property type="method" value="EM"/>
    <property type="resolution" value="3.06 A"/>
    <property type="chains" value="E=1-125"/>
</dbReference>
<dbReference type="PDB" id="7PNW">
    <property type="method" value="EM"/>
    <property type="resolution" value="3.09 A"/>
    <property type="chains" value="E=1-125"/>
</dbReference>
<dbReference type="PDBsum" id="7PNT"/>
<dbReference type="PDBsum" id="7PNU"/>
<dbReference type="PDBsum" id="7PNV"/>
<dbReference type="PDBsum" id="7PNW"/>
<dbReference type="EMDB" id="EMD-13551"/>
<dbReference type="EMDB" id="EMD-13552"/>
<dbReference type="EMDB" id="EMD-13553"/>
<dbReference type="EMDB" id="EMD-13554"/>
<dbReference type="SMR" id="P58064"/>
<dbReference type="BioGRID" id="228251">
    <property type="interactions" value="2"/>
</dbReference>
<dbReference type="ComplexPortal" id="CPX-5301">
    <property type="entry name" value="28S mitochondrial small ribosomal subunit"/>
</dbReference>
<dbReference type="FunCoup" id="P58064">
    <property type="interactions" value="1527"/>
</dbReference>
<dbReference type="STRING" id="10090.ENSMUSP00000037631"/>
<dbReference type="iPTMnet" id="P58064"/>
<dbReference type="PhosphoSitePlus" id="P58064"/>
<dbReference type="jPOST" id="P58064"/>
<dbReference type="PaxDb" id="10090-ENSMUSP00000037631"/>
<dbReference type="PeptideAtlas" id="P58064"/>
<dbReference type="ProteomicsDB" id="262718"/>
<dbReference type="Pumba" id="P58064"/>
<dbReference type="Antibodypedia" id="35213">
    <property type="antibodies" value="65 antibodies from 17 providers"/>
</dbReference>
<dbReference type="Ensembl" id="ENSMUST00000047429.9">
    <property type="protein sequence ID" value="ENSMUSP00000037631.9"/>
    <property type="gene ID" value="ENSMUSG00000039680.11"/>
</dbReference>
<dbReference type="GeneID" id="121022"/>
<dbReference type="KEGG" id="mmu:121022"/>
<dbReference type="UCSC" id="uc007zyu.1">
    <property type="organism name" value="mouse"/>
</dbReference>
<dbReference type="AGR" id="MGI:2153111"/>
<dbReference type="CTD" id="64968"/>
<dbReference type="MGI" id="MGI:2153111">
    <property type="gene designation" value="Mrps6"/>
</dbReference>
<dbReference type="VEuPathDB" id="HostDB:ENSMUSG00000039680"/>
<dbReference type="eggNOG" id="KOG4708">
    <property type="taxonomic scope" value="Eukaryota"/>
</dbReference>
<dbReference type="GeneTree" id="ENSGT00390000014606"/>
<dbReference type="HOGENOM" id="CLU_126331_4_2_1"/>
<dbReference type="InParanoid" id="P58064"/>
<dbReference type="OMA" id="ATHFTIT"/>
<dbReference type="OrthoDB" id="268530at2759"/>
<dbReference type="PhylomeDB" id="P58064"/>
<dbReference type="TreeFam" id="TF314045"/>
<dbReference type="Reactome" id="R-MMU-5389840">
    <property type="pathway name" value="Mitochondrial translation elongation"/>
</dbReference>
<dbReference type="Reactome" id="R-MMU-5419276">
    <property type="pathway name" value="Mitochondrial translation termination"/>
</dbReference>
<dbReference type="BioGRID-ORCS" id="121022">
    <property type="hits" value="21 hits in 77 CRISPR screens"/>
</dbReference>
<dbReference type="ChiTaRS" id="Mrps6">
    <property type="organism name" value="mouse"/>
</dbReference>
<dbReference type="PRO" id="PR:P58064"/>
<dbReference type="Proteomes" id="UP000000589">
    <property type="component" value="Chromosome 16"/>
</dbReference>
<dbReference type="RNAct" id="P58064">
    <property type="molecule type" value="protein"/>
</dbReference>
<dbReference type="Bgee" id="ENSMUSG00000039680">
    <property type="expression patterns" value="Expressed in vestibular membrane of cochlear duct and 251 other cell types or tissues"/>
</dbReference>
<dbReference type="ExpressionAtlas" id="P58064">
    <property type="expression patterns" value="baseline and differential"/>
</dbReference>
<dbReference type="GO" id="GO:0005743">
    <property type="term" value="C:mitochondrial inner membrane"/>
    <property type="evidence" value="ECO:0000303"/>
    <property type="project" value="ComplexPortal"/>
</dbReference>
<dbReference type="GO" id="GO:0005763">
    <property type="term" value="C:mitochondrial small ribosomal subunit"/>
    <property type="evidence" value="ECO:0000250"/>
    <property type="project" value="UniProtKB"/>
</dbReference>
<dbReference type="GO" id="GO:0005739">
    <property type="term" value="C:mitochondrion"/>
    <property type="evidence" value="ECO:0007005"/>
    <property type="project" value="MGI"/>
</dbReference>
<dbReference type="GO" id="GO:0019843">
    <property type="term" value="F:rRNA binding"/>
    <property type="evidence" value="ECO:0007669"/>
    <property type="project" value="InterPro"/>
</dbReference>
<dbReference type="GO" id="GO:0003735">
    <property type="term" value="F:structural constituent of ribosome"/>
    <property type="evidence" value="ECO:0000250"/>
    <property type="project" value="UniProtKB"/>
</dbReference>
<dbReference type="GO" id="GO:0032543">
    <property type="term" value="P:mitochondrial translation"/>
    <property type="evidence" value="ECO:0000250"/>
    <property type="project" value="UniProtKB"/>
</dbReference>
<dbReference type="CDD" id="cd15465">
    <property type="entry name" value="bS6_mito"/>
    <property type="match status" value="1"/>
</dbReference>
<dbReference type="FunFam" id="3.30.70.60:FF:000008">
    <property type="entry name" value="28S ribosomal protein S6, mitochondrial"/>
    <property type="match status" value="1"/>
</dbReference>
<dbReference type="Gene3D" id="3.30.70.60">
    <property type="match status" value="1"/>
</dbReference>
<dbReference type="InterPro" id="IPR000529">
    <property type="entry name" value="Ribosomal_bS6"/>
</dbReference>
<dbReference type="InterPro" id="IPR035980">
    <property type="entry name" value="Ribosomal_bS6_sf"/>
</dbReference>
<dbReference type="InterPro" id="IPR014717">
    <property type="entry name" value="Transl_elong_EF1B/ribsomal_bS6"/>
</dbReference>
<dbReference type="NCBIfam" id="TIGR00166">
    <property type="entry name" value="S6"/>
    <property type="match status" value="1"/>
</dbReference>
<dbReference type="PANTHER" id="PTHR21011">
    <property type="entry name" value="MITOCHONDRIAL 28S RIBOSOMAL PROTEIN S6"/>
    <property type="match status" value="1"/>
</dbReference>
<dbReference type="PANTHER" id="PTHR21011:SF1">
    <property type="entry name" value="SMALL RIBOSOMAL SUBUNIT PROTEIN BS6M"/>
    <property type="match status" value="1"/>
</dbReference>
<dbReference type="Pfam" id="PF01250">
    <property type="entry name" value="Ribosomal_S6"/>
    <property type="match status" value="1"/>
</dbReference>
<dbReference type="SUPFAM" id="SSF54995">
    <property type="entry name" value="Ribosomal protein S6"/>
    <property type="match status" value="1"/>
</dbReference>
<feature type="chain" id="PRO_0000176893" description="Small ribosomal subunit protein bS6m">
    <location>
        <begin position="1"/>
        <end position="125"/>
    </location>
</feature>
<name>RT06_MOUSE</name>
<sequence>MPRYELALILKAMRRPETAAALKRTIESLMDRGAIVRNLESLGERALPYRISSHSQQHSRGGYFLVDFYAPTSAVENILEHLARDIDVVRPNIVKHPLTQEVKECDGIVPVPLEEKLYSTKRRKK</sequence>
<gene>
    <name type="primary">Mrps6</name>
    <name type="synonym">Rpms6</name>
</gene>
<protein>
    <recommendedName>
        <fullName evidence="2">Small ribosomal subunit protein bS6m</fullName>
    </recommendedName>
    <alternativeName>
        <fullName>28S ribosomal protein S6, mitochondrial</fullName>
        <shortName>MRP-S6</shortName>
        <shortName>S6mt</shortName>
    </alternativeName>
</protein>
<organism>
    <name type="scientific">Mus musculus</name>
    <name type="common">Mouse</name>
    <dbReference type="NCBI Taxonomy" id="10090"/>
    <lineage>
        <taxon>Eukaryota</taxon>
        <taxon>Metazoa</taxon>
        <taxon>Chordata</taxon>
        <taxon>Craniata</taxon>
        <taxon>Vertebrata</taxon>
        <taxon>Euteleostomi</taxon>
        <taxon>Mammalia</taxon>
        <taxon>Eutheria</taxon>
        <taxon>Euarchontoglires</taxon>
        <taxon>Glires</taxon>
        <taxon>Rodentia</taxon>
        <taxon>Myomorpha</taxon>
        <taxon>Muroidea</taxon>
        <taxon>Muridae</taxon>
        <taxon>Murinae</taxon>
        <taxon>Mus</taxon>
        <taxon>Mus</taxon>
    </lineage>
</organism>
<accession>P58064</accession>
<reference key="1">
    <citation type="journal article" date="2001" name="J. Biol. Chem.">
        <title>Proteomic analysis of the mammalian mitochondrial ribosome. Identification of protein components in the 28S small subunit.</title>
        <authorList>
            <person name="Suzuki T."/>
            <person name="Terasaki M."/>
            <person name="Takemoto-Hori C."/>
            <person name="Hanada T."/>
            <person name="Ueda T."/>
            <person name="Wada A."/>
            <person name="Watanabe K."/>
        </authorList>
    </citation>
    <scope>NUCLEOTIDE SEQUENCE [MRNA]</scope>
</reference>
<reference key="2">
    <citation type="journal article" date="2002" name="Genomics">
        <title>Nineteen additional unpredicted transcripts from human chromosome 21.</title>
        <authorList>
            <person name="Reymond A."/>
            <person name="Camargo A.A."/>
            <person name="Deutsch S."/>
            <person name="Stevenson B.J."/>
            <person name="Parmigiani R.B."/>
            <person name="Ucla C."/>
            <person name="Bettoni F."/>
            <person name="Rossier C."/>
            <person name="Lyle R."/>
            <person name="Guipponi M."/>
            <person name="de Souza S."/>
            <person name="Iseli C."/>
            <person name="Jongeneel C.V."/>
            <person name="Bucher P."/>
            <person name="Simpson A.J.G."/>
            <person name="Antonarakis S.E."/>
        </authorList>
    </citation>
    <scope>NUCLEOTIDE SEQUENCE [MRNA]</scope>
</reference>
<reference key="3">
    <citation type="journal article" date="2004" name="Genome Res.">
        <title>The status, quality, and expansion of the NIH full-length cDNA project: the Mammalian Gene Collection (MGC).</title>
        <authorList>
            <consortium name="The MGC Project Team"/>
        </authorList>
    </citation>
    <scope>NUCLEOTIDE SEQUENCE [LARGE SCALE MRNA]</scope>
    <source>
        <strain>FVB/N</strain>
        <tissue>Mammary tumor</tissue>
    </source>
</reference>
<reference key="4">
    <citation type="journal article" date="2010" name="Cell">
        <title>A tissue-specific atlas of mouse protein phosphorylation and expression.</title>
        <authorList>
            <person name="Huttlin E.L."/>
            <person name="Jedrychowski M.P."/>
            <person name="Elias J.E."/>
            <person name="Goswami T."/>
            <person name="Rad R."/>
            <person name="Beausoleil S.A."/>
            <person name="Villen J."/>
            <person name="Haas W."/>
            <person name="Sowa M.E."/>
            <person name="Gygi S.P."/>
        </authorList>
    </citation>
    <scope>IDENTIFICATION BY MASS SPECTROMETRY [LARGE SCALE ANALYSIS]</scope>
    <source>
        <tissue>Brain</tissue>
        <tissue>Heart</tissue>
        <tissue>Kidney</tissue>
    </source>
</reference>
<evidence type="ECO:0000250" key="1">
    <source>
        <dbReference type="UniProtKB" id="P82932"/>
    </source>
</evidence>
<evidence type="ECO:0000305" key="2"/>